<keyword id="KW-0025">Alternative splicing</keyword>
<keyword id="KW-0217">Developmental protein</keyword>
<keyword id="KW-0221">Differentiation</keyword>
<keyword id="KW-0472">Membrane</keyword>
<keyword id="KW-0597">Phosphoprotein</keyword>
<keyword id="KW-1185">Reference proteome</keyword>
<keyword id="KW-0744">Spermatogenesis</keyword>
<keyword id="KW-0812">Transmembrane</keyword>
<keyword id="KW-1133">Transmembrane helix</keyword>
<evidence type="ECO:0000255" key="1"/>
<evidence type="ECO:0000256" key="2">
    <source>
        <dbReference type="SAM" id="MobiDB-lite"/>
    </source>
</evidence>
<evidence type="ECO:0000269" key="3">
    <source>
    </source>
</evidence>
<evidence type="ECO:0000303" key="4">
    <source>
    </source>
</evidence>
<evidence type="ECO:0000305" key="5"/>
<evidence type="ECO:0007744" key="6">
    <source>
    </source>
</evidence>
<proteinExistence type="evidence at protein level"/>
<gene>
    <name type="primary">Odf4</name>
    <name type="synonym">Oppo1</name>
</gene>
<name>ODFP4_MOUSE</name>
<dbReference type="EMBL" id="AB074438">
    <property type="protein sequence ID" value="BAB83865.1"/>
    <property type="molecule type" value="mRNA"/>
</dbReference>
<dbReference type="EMBL" id="AL603662">
    <property type="status" value="NOT_ANNOTATED_CDS"/>
    <property type="molecule type" value="Genomic_DNA"/>
</dbReference>
<dbReference type="EMBL" id="BC060992">
    <property type="protein sequence ID" value="AAH60992.1"/>
    <property type="molecule type" value="mRNA"/>
</dbReference>
<dbReference type="CCDS" id="CCDS24872.1">
    <molecule id="Q8VI88-1"/>
</dbReference>
<dbReference type="RefSeq" id="NP_665689.1">
    <molecule id="Q8VI88-1"/>
    <property type="nucleotide sequence ID" value="NM_145746.2"/>
</dbReference>
<dbReference type="FunCoup" id="Q8VI88">
    <property type="interactions" value="15"/>
</dbReference>
<dbReference type="STRING" id="10090.ENSMUSP00000040050"/>
<dbReference type="iPTMnet" id="Q8VI88"/>
<dbReference type="PhosphoSitePlus" id="Q8VI88"/>
<dbReference type="SwissPalm" id="Q8VI88"/>
<dbReference type="PaxDb" id="10090-ENSMUSP00000040050"/>
<dbReference type="ProteomicsDB" id="294268">
    <molecule id="Q8VI88-1"/>
</dbReference>
<dbReference type="ProteomicsDB" id="294269">
    <molecule id="Q8VI88-2"/>
</dbReference>
<dbReference type="Ensembl" id="ENSMUST00000038932.14">
    <molecule id="Q8VI88-1"/>
    <property type="protein sequence ID" value="ENSMUSP00000040050.8"/>
    <property type="gene ID" value="ENSMUSG00000032921.14"/>
</dbReference>
<dbReference type="Ensembl" id="ENSMUST00000130271.8">
    <molecule id="Q8VI88-2"/>
    <property type="protein sequence ID" value="ENSMUSP00000134383.2"/>
    <property type="gene ID" value="ENSMUSG00000032921.14"/>
</dbReference>
<dbReference type="GeneID" id="252868"/>
<dbReference type="KEGG" id="mmu:252868"/>
<dbReference type="UCSC" id="uc007joj.2">
    <molecule id="Q8VI88-1"/>
    <property type="organism name" value="mouse"/>
</dbReference>
<dbReference type="AGR" id="MGI:2182079"/>
<dbReference type="CTD" id="146852"/>
<dbReference type="MGI" id="MGI:2182079">
    <property type="gene designation" value="Odf4"/>
</dbReference>
<dbReference type="VEuPathDB" id="HostDB:ENSMUSG00000032921"/>
<dbReference type="eggNOG" id="ENOG502SXVG">
    <property type="taxonomic scope" value="Eukaryota"/>
</dbReference>
<dbReference type="GeneTree" id="ENSGT01030000234855"/>
<dbReference type="HOGENOM" id="CLU_062754_0_0_1"/>
<dbReference type="InParanoid" id="Q8VI88"/>
<dbReference type="OMA" id="FHWMAQV"/>
<dbReference type="OrthoDB" id="9620006at2759"/>
<dbReference type="PhylomeDB" id="Q8VI88"/>
<dbReference type="TreeFam" id="TF338228"/>
<dbReference type="BioGRID-ORCS" id="252868">
    <property type="hits" value="1 hit in 77 CRISPR screens"/>
</dbReference>
<dbReference type="ChiTaRS" id="Odf4">
    <property type="organism name" value="mouse"/>
</dbReference>
<dbReference type="PRO" id="PR:Q8VI88"/>
<dbReference type="Proteomes" id="UP000000589">
    <property type="component" value="Chromosome 11"/>
</dbReference>
<dbReference type="RNAct" id="Q8VI88">
    <property type="molecule type" value="protein"/>
</dbReference>
<dbReference type="Bgee" id="ENSMUSG00000032921">
    <property type="expression patterns" value="Expressed in spermatocyte and 23 other cell types or tissues"/>
</dbReference>
<dbReference type="ExpressionAtlas" id="Q8VI88">
    <property type="expression patterns" value="baseline and differential"/>
</dbReference>
<dbReference type="GO" id="GO:0016020">
    <property type="term" value="C:membrane"/>
    <property type="evidence" value="ECO:0007669"/>
    <property type="project" value="UniProtKB-SubCell"/>
</dbReference>
<dbReference type="GO" id="GO:0031514">
    <property type="term" value="C:motile cilium"/>
    <property type="evidence" value="ECO:0000314"/>
    <property type="project" value="MGI"/>
</dbReference>
<dbReference type="GO" id="GO:0001520">
    <property type="term" value="C:outer dense fiber"/>
    <property type="evidence" value="ECO:0000314"/>
    <property type="project" value="MGI"/>
</dbReference>
<dbReference type="GO" id="GO:0030154">
    <property type="term" value="P:cell differentiation"/>
    <property type="evidence" value="ECO:0007669"/>
    <property type="project" value="UniProtKB-KW"/>
</dbReference>
<dbReference type="GO" id="GO:0007283">
    <property type="term" value="P:spermatogenesis"/>
    <property type="evidence" value="ECO:0007669"/>
    <property type="project" value="UniProtKB-KW"/>
</dbReference>
<dbReference type="FunFam" id="1.20.140.150:FF:000074">
    <property type="entry name" value="Outer dense fiber of sperm tails 4"/>
    <property type="match status" value="1"/>
</dbReference>
<dbReference type="Gene3D" id="1.20.140.150">
    <property type="match status" value="1"/>
</dbReference>
<dbReference type="InterPro" id="IPR050579">
    <property type="entry name" value="PMP-22/EMP/MP20-like"/>
</dbReference>
<dbReference type="PANTHER" id="PTHR10671">
    <property type="entry name" value="EPITHELIAL MEMBRANE PROTEIN-RELATED"/>
    <property type="match status" value="1"/>
</dbReference>
<dbReference type="PANTHER" id="PTHR10671:SF94">
    <property type="entry name" value="OUTER DENSE FIBER PROTEIN 4"/>
    <property type="match status" value="1"/>
</dbReference>
<organism>
    <name type="scientific">Mus musculus</name>
    <name type="common">Mouse</name>
    <dbReference type="NCBI Taxonomy" id="10090"/>
    <lineage>
        <taxon>Eukaryota</taxon>
        <taxon>Metazoa</taxon>
        <taxon>Chordata</taxon>
        <taxon>Craniata</taxon>
        <taxon>Vertebrata</taxon>
        <taxon>Euteleostomi</taxon>
        <taxon>Mammalia</taxon>
        <taxon>Eutheria</taxon>
        <taxon>Euarchontoglires</taxon>
        <taxon>Glires</taxon>
        <taxon>Rodentia</taxon>
        <taxon>Myomorpha</taxon>
        <taxon>Muroidea</taxon>
        <taxon>Muridae</taxon>
        <taxon>Murinae</taxon>
        <taxon>Mus</taxon>
        <taxon>Mus</taxon>
    </lineage>
</organism>
<comment type="function">
    <text evidence="3">Component of the outer dense fibers (ODF) of spermatozoa which could be involved in sperm tail structure, sperm movement and general organization of cellular cytoskeleton.</text>
</comment>
<comment type="subcellular location">
    <subcellularLocation>
        <location evidence="5">Membrane</location>
        <topology evidence="5">Multi-pass membrane protein</topology>
    </subcellularLocation>
</comment>
<comment type="alternative products">
    <event type="alternative splicing"/>
    <isoform>
        <id>Q8VI88-1</id>
        <name>1</name>
        <sequence type="displayed"/>
    </isoform>
    <isoform>
        <id>Q8VI88-2</id>
        <name>2</name>
        <sequence type="described" ref="VSP_028117 VSP_028118"/>
    </isoform>
</comment>
<comment type="tissue specificity">
    <text evidence="3">Expressed in testis.</text>
</comment>
<comment type="developmental stage">
    <text evidence="3">Expressed from late pachytene stage and expression persists during embryonic development.</text>
</comment>
<sequence>MEPDLNEEESERIRTSRNRRSLEHRRNSLLPFQWKATNNSRWMAQVVASEFSLVAFLLLLVMVFSKKWLYPSKSRFHQRYPQNVTKRVYTSIHSMSTGLLYICVSKSCPSSDNGEDNFKMWTIHPVFGVAKISFTLAIGLGFVLTTWLHLPYLPCLQRMPFFGLIGIILSFCEVTLIFLTLLLFPVNLWIYELRKNISVPIGWSYFIGWLVLILYFTCGILCYLNHKNYWSLIMSSTTINTACSSLGPESLVSPSQTPSSQENSQESPKDDQKPSSPDKVVSPPQPDTTG</sequence>
<reference key="1">
    <citation type="journal article" date="2002" name="Biol. Reprod.">
        <title>Molecular cloning and characterization of Oppo 1: a haploid germ cell-specific complementary DNA encoding sperm tail protein.</title>
        <authorList>
            <person name="Nakamura Y."/>
            <person name="Tanaka H."/>
            <person name="Koga M."/>
            <person name="Miyagawa Y."/>
            <person name="Iguchi N."/>
            <person name="Egydio de Carvalho C."/>
            <person name="Yomogida K."/>
            <person name="Nozaki M."/>
            <person name="Nojima H."/>
            <person name="Matsumiya K."/>
            <person name="Okuyama A."/>
            <person name="Nishimune Y."/>
        </authorList>
    </citation>
    <scope>NUCLEOTIDE SEQUENCE [MRNA] (ISOFORM 1)</scope>
    <scope>FUNCTION</scope>
    <scope>TISSUE SPECIFICITY</scope>
    <scope>DEVELOPMENTAL STAGE</scope>
    <source>
        <tissue>Testis</tissue>
    </source>
</reference>
<reference key="2">
    <citation type="journal article" date="2009" name="PLoS Biol.">
        <title>Lineage-specific biology revealed by a finished genome assembly of the mouse.</title>
        <authorList>
            <person name="Church D.M."/>
            <person name="Goodstadt L."/>
            <person name="Hillier L.W."/>
            <person name="Zody M.C."/>
            <person name="Goldstein S."/>
            <person name="She X."/>
            <person name="Bult C.J."/>
            <person name="Agarwala R."/>
            <person name="Cherry J.L."/>
            <person name="DiCuccio M."/>
            <person name="Hlavina W."/>
            <person name="Kapustin Y."/>
            <person name="Meric P."/>
            <person name="Maglott D."/>
            <person name="Birtle Z."/>
            <person name="Marques A.C."/>
            <person name="Graves T."/>
            <person name="Zhou S."/>
            <person name="Teague B."/>
            <person name="Potamousis K."/>
            <person name="Churas C."/>
            <person name="Place M."/>
            <person name="Herschleb J."/>
            <person name="Runnheim R."/>
            <person name="Forrest D."/>
            <person name="Amos-Landgraf J."/>
            <person name="Schwartz D.C."/>
            <person name="Cheng Z."/>
            <person name="Lindblad-Toh K."/>
            <person name="Eichler E.E."/>
            <person name="Ponting C.P."/>
        </authorList>
    </citation>
    <scope>NUCLEOTIDE SEQUENCE [LARGE SCALE GENOMIC DNA]</scope>
    <source>
        <strain>C57BL/6J</strain>
    </source>
</reference>
<reference key="3">
    <citation type="journal article" date="2004" name="Genome Res.">
        <title>The status, quality, and expansion of the NIH full-length cDNA project: the Mammalian Gene Collection (MGC).</title>
        <authorList>
            <consortium name="The MGC Project Team"/>
        </authorList>
    </citation>
    <scope>NUCLEOTIDE SEQUENCE [LARGE SCALE MRNA] (ISOFORM 2)</scope>
    <source>
        <tissue>Testis</tissue>
    </source>
</reference>
<reference key="4">
    <citation type="journal article" date="2010" name="Cell">
        <title>A tissue-specific atlas of mouse protein phosphorylation and expression.</title>
        <authorList>
            <person name="Huttlin E.L."/>
            <person name="Jedrychowski M.P."/>
            <person name="Elias J.E."/>
            <person name="Goswami T."/>
            <person name="Rad R."/>
            <person name="Beausoleil S.A."/>
            <person name="Villen J."/>
            <person name="Haas W."/>
            <person name="Sowa M.E."/>
            <person name="Gygi S.P."/>
        </authorList>
    </citation>
    <scope>PHOSPHORYLATION [LARGE SCALE ANALYSIS] AT SER-28</scope>
    <scope>IDENTIFICATION BY MASS SPECTROMETRY [LARGE SCALE ANALYSIS]</scope>
    <source>
        <tissue>Testis</tissue>
    </source>
</reference>
<accession>Q8VI88</accession>
<accession>Q6P8Z7</accession>
<protein>
    <recommendedName>
        <fullName>Outer dense fiber protein 4</fullName>
    </recommendedName>
    <alternativeName>
        <fullName>Outer dense fiber of sperm tails protein 4</fullName>
    </alternativeName>
    <alternativeName>
        <fullName>Testis-specific protein oppo 1</fullName>
    </alternativeName>
</protein>
<feature type="chain" id="PRO_0000304723" description="Outer dense fiber protein 4">
    <location>
        <begin position="1"/>
        <end position="290"/>
    </location>
</feature>
<feature type="transmembrane region" description="Helical" evidence="1">
    <location>
        <begin position="44"/>
        <end position="64"/>
    </location>
</feature>
<feature type="transmembrane region" description="Helical" evidence="1">
    <location>
        <begin position="125"/>
        <end position="145"/>
    </location>
</feature>
<feature type="transmembrane region" description="Helical" evidence="1">
    <location>
        <begin position="164"/>
        <end position="184"/>
    </location>
</feature>
<feature type="transmembrane region" description="Helical" evidence="1">
    <location>
        <begin position="201"/>
        <end position="221"/>
    </location>
</feature>
<feature type="region of interest" description="Disordered" evidence="2">
    <location>
        <begin position="247"/>
        <end position="290"/>
    </location>
</feature>
<feature type="compositionally biased region" description="Polar residues" evidence="2">
    <location>
        <begin position="252"/>
        <end position="266"/>
    </location>
</feature>
<feature type="modified residue" description="Phosphoserine" evidence="6">
    <location>
        <position position="28"/>
    </location>
</feature>
<feature type="splice variant" id="VSP_028117" description="In isoform 2." evidence="4">
    <original>VTLIF</original>
    <variation>GAPQL</variation>
    <location>
        <begin position="174"/>
        <end position="178"/>
    </location>
</feature>
<feature type="splice variant" id="VSP_028118" description="In isoform 2." evidence="4">
    <location>
        <begin position="179"/>
        <end position="290"/>
    </location>
</feature>
<feature type="sequence conflict" description="In Ref. 3; AAH60992." evidence="5" ref="3">
    <location>
        <position position="16"/>
    </location>
</feature>